<accession>Q77KZ6</accession>
<accession>Q8V687</accession>
<organismHost>
    <name type="scientific">Bos taurus</name>
    <name type="common">Bovine</name>
    <dbReference type="NCBI Taxonomy" id="9913"/>
</organismHost>
<comment type="function">
    <text evidence="1">Mediates the regulatory switch from transcription to RNA replication. Acts late in infection by inhibiting viral transcription and up-regulating RNA replication. Inhibition of transcription by protein M2-2 requires phosphorylation of the phosphoprotein.</text>
</comment>
<comment type="subcellular location">
    <subcellularLocation>
        <location evidence="1">Host cytoplasm</location>
    </subcellularLocation>
</comment>
<comment type="similarity">
    <text evidence="2">Belongs to the orthopneumovirus M2-2 protein family.</text>
</comment>
<evidence type="ECO:0000250" key="1">
    <source>
        <dbReference type="UniProtKB" id="P88812"/>
    </source>
</evidence>
<evidence type="ECO:0000305" key="2"/>
<protein>
    <recommendedName>
        <fullName>Protein M2-2</fullName>
    </recommendedName>
</protein>
<feature type="chain" id="PRO_0000365793" description="Protein M2-2">
    <location>
        <begin position="1"/>
        <end position="90"/>
    </location>
</feature>
<feature type="sequence variant" description="In strain: ATCC51908.">
    <original>D</original>
    <variation>N</variation>
    <location>
        <position position="24"/>
    </location>
</feature>
<feature type="sequence variant" description="In strain: ATCC51908.">
    <original>F</original>
    <variation>I</variation>
    <location>
        <position position="29"/>
    </location>
</feature>
<feature type="sequence variant" description="In strain: ATCC51908.">
    <original>C</original>
    <variation>Y</variation>
    <location>
        <position position="39"/>
    </location>
</feature>
<feature type="sequence variant" description="In strain: ATCC51908.">
    <original>Y</original>
    <variation>C</variation>
    <location>
        <position position="46"/>
    </location>
</feature>
<feature type="sequence variant" description="In strain: ATCC51908.">
    <original>N</original>
    <variation>S</variation>
    <location>
        <position position="81"/>
    </location>
</feature>
<sequence length="90" mass="10602">MNNSNIIIFPEKYPCSISSLLIKDENDVFVLSHQNVLDCLQFQYPYNMYSQNHMLDDIYWTSQELIEDVLKILHLSGISINKYVIYVLVL</sequence>
<name>M22_BRSVA</name>
<gene>
    <name type="primary">M2-2</name>
</gene>
<reference key="1">
    <citation type="journal article" date="2001" name="Virus Genes">
        <title>Rescue of bovine respiratory syncytial virus from cloned cDNA: entire genome sequence of BRSV strain A51908.</title>
        <authorList>
            <person name="Yunus A.S."/>
            <person name="Khattar S.K."/>
            <person name="Collins P.L."/>
            <person name="Samal S.K."/>
        </authorList>
    </citation>
    <scope>NUCLEOTIDE SEQUENCE [GENOMIC RNA]</scope>
</reference>
<organism>
    <name type="scientific">Bovine respiratory syncytial virus (strain A51908)</name>
    <name type="common">BRS</name>
    <dbReference type="NCBI Taxonomy" id="11247"/>
    <lineage>
        <taxon>Viruses</taxon>
        <taxon>Riboviria</taxon>
        <taxon>Orthornavirae</taxon>
        <taxon>Negarnaviricota</taxon>
        <taxon>Haploviricotina</taxon>
        <taxon>Monjiviricetes</taxon>
        <taxon>Mononegavirales</taxon>
        <taxon>Pneumoviridae</taxon>
        <taxon>Orthopneumovirus</taxon>
        <taxon>Orthopneumovirus bovis</taxon>
        <taxon>bovine respiratory syncytial virus</taxon>
    </lineage>
</organism>
<proteinExistence type="inferred from homology"/>
<dbReference type="EMBL" id="AF295543">
    <property type="protein sequence ID" value="AAL49401.1"/>
    <property type="molecule type" value="Genomic_RNA"/>
</dbReference>
<dbReference type="EMBL" id="AF295544">
    <property type="protein sequence ID" value="AAL49412.1"/>
    <property type="molecule type" value="Genomic_RNA"/>
</dbReference>
<dbReference type="Proteomes" id="UP000007616">
    <property type="component" value="Genome"/>
</dbReference>
<dbReference type="GO" id="GO:0030430">
    <property type="term" value="C:host cell cytoplasm"/>
    <property type="evidence" value="ECO:0007669"/>
    <property type="project" value="UniProtKB-SubCell"/>
</dbReference>
<dbReference type="InterPro" id="IPR009969">
    <property type="entry name" value="Pneumo_M2-2"/>
</dbReference>
<dbReference type="Pfam" id="PF07380">
    <property type="entry name" value="Pneumo_M2"/>
    <property type="match status" value="1"/>
</dbReference>
<keyword id="KW-1035">Host cytoplasm</keyword>
<keyword id="KW-1185">Reference proteome</keyword>
<keyword id="KW-0693">Viral RNA replication</keyword>